<gene>
    <name type="primary">MSH3</name>
    <name type="ordered locus">KLLA0C18590g</name>
</gene>
<keyword id="KW-0067">ATP-binding</keyword>
<keyword id="KW-0227">DNA damage</keyword>
<keyword id="KW-0234">DNA repair</keyword>
<keyword id="KW-0238">DNA-binding</keyword>
<keyword id="KW-0547">Nucleotide-binding</keyword>
<keyword id="KW-0539">Nucleus</keyword>
<keyword id="KW-1185">Reference proteome</keyword>
<dbReference type="EMBL" id="CR382123">
    <property type="protein sequence ID" value="CAH01879.1"/>
    <property type="molecule type" value="Genomic_DNA"/>
</dbReference>
<dbReference type="RefSeq" id="XP_453028.1">
    <property type="nucleotide sequence ID" value="XM_453028.1"/>
</dbReference>
<dbReference type="SMR" id="Q6CSR1"/>
<dbReference type="FunCoup" id="Q6CSR1">
    <property type="interactions" value="868"/>
</dbReference>
<dbReference type="STRING" id="284590.Q6CSR1"/>
<dbReference type="PaxDb" id="284590-Q6CSR1"/>
<dbReference type="KEGG" id="kla:KLLA0_C18590g"/>
<dbReference type="eggNOG" id="KOG0218">
    <property type="taxonomic scope" value="Eukaryota"/>
</dbReference>
<dbReference type="HOGENOM" id="CLU_002472_0_2_1"/>
<dbReference type="InParanoid" id="Q6CSR1"/>
<dbReference type="OMA" id="INMHAAR"/>
<dbReference type="Proteomes" id="UP000000598">
    <property type="component" value="Chromosome C"/>
</dbReference>
<dbReference type="GO" id="GO:0005634">
    <property type="term" value="C:nucleus"/>
    <property type="evidence" value="ECO:0007669"/>
    <property type="project" value="UniProtKB-SubCell"/>
</dbReference>
<dbReference type="GO" id="GO:0005524">
    <property type="term" value="F:ATP binding"/>
    <property type="evidence" value="ECO:0007669"/>
    <property type="project" value="UniProtKB-KW"/>
</dbReference>
<dbReference type="GO" id="GO:0140664">
    <property type="term" value="F:ATP-dependent DNA damage sensor activity"/>
    <property type="evidence" value="ECO:0007669"/>
    <property type="project" value="InterPro"/>
</dbReference>
<dbReference type="GO" id="GO:0030983">
    <property type="term" value="F:mismatched DNA binding"/>
    <property type="evidence" value="ECO:0007669"/>
    <property type="project" value="InterPro"/>
</dbReference>
<dbReference type="GO" id="GO:0006298">
    <property type="term" value="P:mismatch repair"/>
    <property type="evidence" value="ECO:0007669"/>
    <property type="project" value="InterPro"/>
</dbReference>
<dbReference type="GO" id="GO:0006312">
    <property type="term" value="P:mitotic recombination"/>
    <property type="evidence" value="ECO:0007669"/>
    <property type="project" value="TreeGrafter"/>
</dbReference>
<dbReference type="Gene3D" id="1.10.1420.10">
    <property type="match status" value="2"/>
</dbReference>
<dbReference type="Gene3D" id="3.40.1170.10">
    <property type="entry name" value="DNA repair protein MutS, domain I"/>
    <property type="match status" value="1"/>
</dbReference>
<dbReference type="Gene3D" id="3.30.420.110">
    <property type="entry name" value="MutS, connector domain"/>
    <property type="match status" value="1"/>
</dbReference>
<dbReference type="Gene3D" id="3.40.50.300">
    <property type="entry name" value="P-loop containing nucleotide triphosphate hydrolases"/>
    <property type="match status" value="1"/>
</dbReference>
<dbReference type="InterPro" id="IPR007695">
    <property type="entry name" value="DNA_mismatch_repair_MutS-lik_N"/>
</dbReference>
<dbReference type="InterPro" id="IPR017261">
    <property type="entry name" value="DNA_mismatch_repair_MutS/MSH"/>
</dbReference>
<dbReference type="InterPro" id="IPR000432">
    <property type="entry name" value="DNA_mismatch_repair_MutS_C"/>
</dbReference>
<dbReference type="InterPro" id="IPR007861">
    <property type="entry name" value="DNA_mismatch_repair_MutS_clamp"/>
</dbReference>
<dbReference type="InterPro" id="IPR007696">
    <property type="entry name" value="DNA_mismatch_repair_MutS_core"/>
</dbReference>
<dbReference type="InterPro" id="IPR016151">
    <property type="entry name" value="DNA_mismatch_repair_MutS_N"/>
</dbReference>
<dbReference type="InterPro" id="IPR036187">
    <property type="entry name" value="DNA_mismatch_repair_MutS_sf"/>
</dbReference>
<dbReference type="InterPro" id="IPR045076">
    <property type="entry name" value="MutS"/>
</dbReference>
<dbReference type="InterPro" id="IPR036678">
    <property type="entry name" value="MutS_con_dom_sf"/>
</dbReference>
<dbReference type="InterPro" id="IPR027417">
    <property type="entry name" value="P-loop_NTPase"/>
</dbReference>
<dbReference type="NCBIfam" id="NF003810">
    <property type="entry name" value="PRK05399.1"/>
    <property type="match status" value="1"/>
</dbReference>
<dbReference type="PANTHER" id="PTHR11361:SF122">
    <property type="entry name" value="DNA MISMATCH REPAIR PROTEIN MSH3"/>
    <property type="match status" value="1"/>
</dbReference>
<dbReference type="PANTHER" id="PTHR11361">
    <property type="entry name" value="DNA MISMATCH REPAIR PROTEIN MUTS FAMILY MEMBER"/>
    <property type="match status" value="1"/>
</dbReference>
<dbReference type="Pfam" id="PF01624">
    <property type="entry name" value="MutS_I"/>
    <property type="match status" value="1"/>
</dbReference>
<dbReference type="Pfam" id="PF05192">
    <property type="entry name" value="MutS_III"/>
    <property type="match status" value="1"/>
</dbReference>
<dbReference type="Pfam" id="PF05190">
    <property type="entry name" value="MutS_IV"/>
    <property type="match status" value="1"/>
</dbReference>
<dbReference type="Pfam" id="PF00488">
    <property type="entry name" value="MutS_V"/>
    <property type="match status" value="1"/>
</dbReference>
<dbReference type="PIRSF" id="PIRSF037677">
    <property type="entry name" value="DNA_mis_repair_Msh6"/>
    <property type="match status" value="1"/>
</dbReference>
<dbReference type="SMART" id="SM00534">
    <property type="entry name" value="MUTSac"/>
    <property type="match status" value="1"/>
</dbReference>
<dbReference type="SMART" id="SM00533">
    <property type="entry name" value="MUTSd"/>
    <property type="match status" value="1"/>
</dbReference>
<dbReference type="SUPFAM" id="SSF55271">
    <property type="entry name" value="DNA repair protein MutS, domain I"/>
    <property type="match status" value="1"/>
</dbReference>
<dbReference type="SUPFAM" id="SSF48334">
    <property type="entry name" value="DNA repair protein MutS, domain III"/>
    <property type="match status" value="1"/>
</dbReference>
<dbReference type="SUPFAM" id="SSF52540">
    <property type="entry name" value="P-loop containing nucleoside triphosphate hydrolases"/>
    <property type="match status" value="1"/>
</dbReference>
<dbReference type="PROSITE" id="PS00486">
    <property type="entry name" value="DNA_MISMATCH_REPAIR_2"/>
    <property type="match status" value="1"/>
</dbReference>
<sequence>MYQPTISHFFKSSQPSSQTDTRQDEDQRLDIESHEQRGGANMNKDELINILGSDSESDQDLDEDLDQDQNNNQDQDQEQDRDLASKANNGRSTLSAERIERRPDFNEKLKTIMRKRNAGSMINTGSDDENDDNDDVKSTKRTKANNKKLTELDQQFKELKLKHMDTILCVRVGYKYKFFAKDAEIVSNILQIKLVPGKKTLDESDPNDRNYRKFQYCSIPDTRLHVHLQRLVFFNYKVAVVEQTETSALKKNNNSGSLFTREIKNIFTKVSYGINETFDKSEDRILGDLTSVWAISINETSKMRKVNLISVQLNSGEIVHDQFSDDILLNVNLEARIRYLNPTEIITEEELPPSIRTIFTKLNQDIQFYQSHKEACPNLFDALQGLDLNNELKRLLSVLHSYLSTFENTKVLYFASNYSSFTAKNFMVLPRNTIESLEIFENSTTNKTNGSLLWVMDHTRTQFGYRLLRKWISKPLIDLKSILDRQDAITCIMKEVHSIFFESFNELLRKSIDLERALNRIAYGSTSRKEVYFFLKQIATFASLFKSHHTFIHDQLHKENSALRKTSCLLFNILQNLDAFFSATDLPLFLQMINVDAALDKDSHKNVIEFFNLNKYDFPEGLLHKYRDIEEVKTELDDELQNIKRVLKRPTLSYKDTKDYLIEVRNTQAKTVPSNWVKVNSTKAVSRFRTPKTEELVGKLLYHNDLLNLLAEDEFKRFLQRIVDRYAEIKTCINNLATYDCILSLAATSSNVNYVKPKLTELHQKVKVKNGRNPIIESLDVNYVPNDVLMSSNSGKINIITGPNMGGKSSYIRQVALLVIMTQIGCYIPADSAEMSICDRIFTRIGSHDDLLNAKSTFQVEMSEVLHILNSSTPRSLLLLDEVGRGTGTHDGLSISFAILNYFVYLADNCPLVLFITHYSALCQIDSKLIANYHMSYIEKHQPGEKWTNVIFLYKLVLGQAHNSYGFNVAKLSNIPTEIINRAFEVSEEKILSSKHHNFLEIMKALKRVNERKLNKEALKKIQAFIEDI</sequence>
<evidence type="ECO:0000250" key="1"/>
<evidence type="ECO:0000255" key="2"/>
<evidence type="ECO:0000256" key="3">
    <source>
        <dbReference type="SAM" id="MobiDB-lite"/>
    </source>
</evidence>
<evidence type="ECO:0000305" key="4"/>
<organism>
    <name type="scientific">Kluyveromyces lactis (strain ATCC 8585 / CBS 2359 / DSM 70799 / NBRC 1267 / NRRL Y-1140 / WM37)</name>
    <name type="common">Yeast</name>
    <name type="synonym">Candida sphaerica</name>
    <dbReference type="NCBI Taxonomy" id="284590"/>
    <lineage>
        <taxon>Eukaryota</taxon>
        <taxon>Fungi</taxon>
        <taxon>Dikarya</taxon>
        <taxon>Ascomycota</taxon>
        <taxon>Saccharomycotina</taxon>
        <taxon>Saccharomycetes</taxon>
        <taxon>Saccharomycetales</taxon>
        <taxon>Saccharomycetaceae</taxon>
        <taxon>Kluyveromyces</taxon>
    </lineage>
</organism>
<feature type="chain" id="PRO_0000338522" description="DNA mismatch repair protein MSH3">
    <location>
        <begin position="1"/>
        <end position="1029"/>
    </location>
</feature>
<feature type="region of interest" description="Disordered" evidence="3">
    <location>
        <begin position="1"/>
        <end position="142"/>
    </location>
</feature>
<feature type="region of interest" description="Mispair-binding domain" evidence="1">
    <location>
        <begin position="143"/>
        <end position="270"/>
    </location>
</feature>
<feature type="compositionally biased region" description="Polar residues" evidence="3">
    <location>
        <begin position="1"/>
        <end position="20"/>
    </location>
</feature>
<feature type="compositionally biased region" description="Basic and acidic residues" evidence="3">
    <location>
        <begin position="21"/>
        <end position="47"/>
    </location>
</feature>
<feature type="compositionally biased region" description="Acidic residues" evidence="3">
    <location>
        <begin position="55"/>
        <end position="67"/>
    </location>
</feature>
<feature type="compositionally biased region" description="Polar residues" evidence="3">
    <location>
        <begin position="86"/>
        <end position="95"/>
    </location>
</feature>
<feature type="compositionally biased region" description="Basic and acidic residues" evidence="3">
    <location>
        <begin position="97"/>
        <end position="110"/>
    </location>
</feature>
<feature type="binding site" evidence="2">
    <location>
        <begin position="802"/>
        <end position="809"/>
    </location>
    <ligand>
        <name>ATP</name>
        <dbReference type="ChEBI" id="CHEBI:30616"/>
    </ligand>
</feature>
<protein>
    <recommendedName>
        <fullName>DNA mismatch repair protein MSH3</fullName>
    </recommendedName>
    <alternativeName>
        <fullName>MutS protein homolog 3</fullName>
    </alternativeName>
</protein>
<accession>Q6CSR1</accession>
<name>MSH3_KLULA</name>
<comment type="function">
    <text evidence="1">Component of the post-replicative DNA mismatch repair system (MMR). Heterodimerizes with MSH2 to form MutS beta, which binds to DNA mismatches thereby initiating DNA repair. MSH3 provides substrate-binding and substrate specificity to the complex. When bound, the MutS beta heterodimer bends the DNA helix and shields approximately 20 base pairs. Acts mainly to repair insertion-deletion loops (IDLs) from 2 to 13 nucleotides in size, but can also repair base-base and single insertion-deletion mismatches that occur during replication. After mismatch binding, forms a ternary complex with the MutL alpha heterodimer, which is thought to be responsible for directing the downstream MMR events, including strand discrimination, excision, and resynthesis. ATP binding and hydrolysis play a pivotal role in mismatch repair functions (By similarity).</text>
</comment>
<comment type="subunit">
    <text evidence="1">Heterodimer consisting of MSH2-MSH3 (MutS beta). Forms a ternary complex with MutL alpha (MLH1-PMS1) (By similarity).</text>
</comment>
<comment type="subcellular location">
    <subcellularLocation>
        <location evidence="1">Nucleus</location>
    </subcellularLocation>
</comment>
<comment type="similarity">
    <text evidence="4">Belongs to the DNA mismatch repair MutS family. MSH3 subfamily.</text>
</comment>
<reference key="1">
    <citation type="journal article" date="2004" name="Nature">
        <title>Genome evolution in yeasts.</title>
        <authorList>
            <person name="Dujon B."/>
            <person name="Sherman D."/>
            <person name="Fischer G."/>
            <person name="Durrens P."/>
            <person name="Casaregola S."/>
            <person name="Lafontaine I."/>
            <person name="de Montigny J."/>
            <person name="Marck C."/>
            <person name="Neuveglise C."/>
            <person name="Talla E."/>
            <person name="Goffard N."/>
            <person name="Frangeul L."/>
            <person name="Aigle M."/>
            <person name="Anthouard V."/>
            <person name="Babour A."/>
            <person name="Barbe V."/>
            <person name="Barnay S."/>
            <person name="Blanchin S."/>
            <person name="Beckerich J.-M."/>
            <person name="Beyne E."/>
            <person name="Bleykasten C."/>
            <person name="Boisrame A."/>
            <person name="Boyer J."/>
            <person name="Cattolico L."/>
            <person name="Confanioleri F."/>
            <person name="de Daruvar A."/>
            <person name="Despons L."/>
            <person name="Fabre E."/>
            <person name="Fairhead C."/>
            <person name="Ferry-Dumazet H."/>
            <person name="Groppi A."/>
            <person name="Hantraye F."/>
            <person name="Hennequin C."/>
            <person name="Jauniaux N."/>
            <person name="Joyet P."/>
            <person name="Kachouri R."/>
            <person name="Kerrest A."/>
            <person name="Koszul R."/>
            <person name="Lemaire M."/>
            <person name="Lesur I."/>
            <person name="Ma L."/>
            <person name="Muller H."/>
            <person name="Nicaud J.-M."/>
            <person name="Nikolski M."/>
            <person name="Oztas S."/>
            <person name="Ozier-Kalogeropoulos O."/>
            <person name="Pellenz S."/>
            <person name="Potier S."/>
            <person name="Richard G.-F."/>
            <person name="Straub M.-L."/>
            <person name="Suleau A."/>
            <person name="Swennen D."/>
            <person name="Tekaia F."/>
            <person name="Wesolowski-Louvel M."/>
            <person name="Westhof E."/>
            <person name="Wirth B."/>
            <person name="Zeniou-Meyer M."/>
            <person name="Zivanovic Y."/>
            <person name="Bolotin-Fukuhara M."/>
            <person name="Thierry A."/>
            <person name="Bouchier C."/>
            <person name="Caudron B."/>
            <person name="Scarpelli C."/>
            <person name="Gaillardin C."/>
            <person name="Weissenbach J."/>
            <person name="Wincker P."/>
            <person name="Souciet J.-L."/>
        </authorList>
    </citation>
    <scope>NUCLEOTIDE SEQUENCE [LARGE SCALE GENOMIC DNA]</scope>
    <source>
        <strain>ATCC 8585 / CBS 2359 / DSM 70799 / NBRC 1267 / NRRL Y-1140 / WM37</strain>
    </source>
</reference>
<proteinExistence type="inferred from homology"/>